<gene>
    <name type="primary">Cdk2ap1</name>
    <name type="synonym">Cdkap1</name>
    <name type="synonym">Doc1</name>
</gene>
<evidence type="ECO:0000250" key="1">
    <source>
        <dbReference type="UniProtKB" id="O14519"/>
    </source>
</evidence>
<evidence type="ECO:0000255" key="2"/>
<evidence type="ECO:0000256" key="3">
    <source>
        <dbReference type="SAM" id="MobiDB-lite"/>
    </source>
</evidence>
<evidence type="ECO:0000269" key="4">
    <source>
    </source>
</evidence>
<evidence type="ECO:0000305" key="5"/>
<name>CDKA1_MOUSE</name>
<sequence>MSYKPNLTAHMPAAALNAGSVHSPSTSMATSSQYRQLLSDYGPPSLGYTQGTGNSQVPQSKYAELLAIIEELGKEIRPTYAGSKSAMERLKRGIIHARSLVRECLAETERNARS</sequence>
<protein>
    <recommendedName>
        <fullName>Cyclin-dependent kinase 2-associated protein 1</fullName>
        <shortName>CDK2-associated protein 1</shortName>
    </recommendedName>
    <alternativeName>
        <fullName>Deleted in oral cancer 1</fullName>
        <shortName>DOC-1</shortName>
    </alternativeName>
    <alternativeName>
        <fullName>Putative oral cancer suppressor</fullName>
    </alternativeName>
</protein>
<organism>
    <name type="scientific">Mus musculus</name>
    <name type="common">Mouse</name>
    <dbReference type="NCBI Taxonomy" id="10090"/>
    <lineage>
        <taxon>Eukaryota</taxon>
        <taxon>Metazoa</taxon>
        <taxon>Chordata</taxon>
        <taxon>Craniata</taxon>
        <taxon>Vertebrata</taxon>
        <taxon>Euteleostomi</taxon>
        <taxon>Mammalia</taxon>
        <taxon>Eutheria</taxon>
        <taxon>Euarchontoglires</taxon>
        <taxon>Glires</taxon>
        <taxon>Rodentia</taxon>
        <taxon>Myomorpha</taxon>
        <taxon>Muroidea</taxon>
        <taxon>Muridae</taxon>
        <taxon>Murinae</taxon>
        <taxon>Mus</taxon>
        <taxon>Mus</taxon>
    </lineage>
</organism>
<accession>O35207</accession>
<accession>B2RV53</accession>
<accession>Q3SYK3</accession>
<accession>Q6ZWZ1</accession>
<keyword id="KW-0131">Cell cycle</keyword>
<keyword id="KW-0158">Chromosome</keyword>
<keyword id="KW-1015">Disulfide bond</keyword>
<keyword id="KW-0539">Nucleus</keyword>
<keyword id="KW-0597">Phosphoprotein</keyword>
<keyword id="KW-1185">Reference proteome</keyword>
<keyword id="KW-0804">Transcription</keyword>
<keyword id="KW-0805">Transcription regulation</keyword>
<keyword id="KW-0043">Tumor suppressor</keyword>
<proteinExistence type="evidence at protein level"/>
<reference key="1">
    <citation type="journal article" date="2005" name="Science">
        <title>The transcriptional landscape of the mammalian genome.</title>
        <authorList>
            <person name="Carninci P."/>
            <person name="Kasukawa T."/>
            <person name="Katayama S."/>
            <person name="Gough J."/>
            <person name="Frith M.C."/>
            <person name="Maeda N."/>
            <person name="Oyama R."/>
            <person name="Ravasi T."/>
            <person name="Lenhard B."/>
            <person name="Wells C."/>
            <person name="Kodzius R."/>
            <person name="Shimokawa K."/>
            <person name="Bajic V.B."/>
            <person name="Brenner S.E."/>
            <person name="Batalov S."/>
            <person name="Forrest A.R."/>
            <person name="Zavolan M."/>
            <person name="Davis M.J."/>
            <person name="Wilming L.G."/>
            <person name="Aidinis V."/>
            <person name="Allen J.E."/>
            <person name="Ambesi-Impiombato A."/>
            <person name="Apweiler R."/>
            <person name="Aturaliya R.N."/>
            <person name="Bailey T.L."/>
            <person name="Bansal M."/>
            <person name="Baxter L."/>
            <person name="Beisel K.W."/>
            <person name="Bersano T."/>
            <person name="Bono H."/>
            <person name="Chalk A.M."/>
            <person name="Chiu K.P."/>
            <person name="Choudhary V."/>
            <person name="Christoffels A."/>
            <person name="Clutterbuck D.R."/>
            <person name="Crowe M.L."/>
            <person name="Dalla E."/>
            <person name="Dalrymple B.P."/>
            <person name="de Bono B."/>
            <person name="Della Gatta G."/>
            <person name="di Bernardo D."/>
            <person name="Down T."/>
            <person name="Engstrom P."/>
            <person name="Fagiolini M."/>
            <person name="Faulkner G."/>
            <person name="Fletcher C.F."/>
            <person name="Fukushima T."/>
            <person name="Furuno M."/>
            <person name="Futaki S."/>
            <person name="Gariboldi M."/>
            <person name="Georgii-Hemming P."/>
            <person name="Gingeras T.R."/>
            <person name="Gojobori T."/>
            <person name="Green R.E."/>
            <person name="Gustincich S."/>
            <person name="Harbers M."/>
            <person name="Hayashi Y."/>
            <person name="Hensch T.K."/>
            <person name="Hirokawa N."/>
            <person name="Hill D."/>
            <person name="Huminiecki L."/>
            <person name="Iacono M."/>
            <person name="Ikeo K."/>
            <person name="Iwama A."/>
            <person name="Ishikawa T."/>
            <person name="Jakt M."/>
            <person name="Kanapin A."/>
            <person name="Katoh M."/>
            <person name="Kawasawa Y."/>
            <person name="Kelso J."/>
            <person name="Kitamura H."/>
            <person name="Kitano H."/>
            <person name="Kollias G."/>
            <person name="Krishnan S.P."/>
            <person name="Kruger A."/>
            <person name="Kummerfeld S.K."/>
            <person name="Kurochkin I.V."/>
            <person name="Lareau L.F."/>
            <person name="Lazarevic D."/>
            <person name="Lipovich L."/>
            <person name="Liu J."/>
            <person name="Liuni S."/>
            <person name="McWilliam S."/>
            <person name="Madan Babu M."/>
            <person name="Madera M."/>
            <person name="Marchionni L."/>
            <person name="Matsuda H."/>
            <person name="Matsuzawa S."/>
            <person name="Miki H."/>
            <person name="Mignone F."/>
            <person name="Miyake S."/>
            <person name="Morris K."/>
            <person name="Mottagui-Tabar S."/>
            <person name="Mulder N."/>
            <person name="Nakano N."/>
            <person name="Nakauchi H."/>
            <person name="Ng P."/>
            <person name="Nilsson R."/>
            <person name="Nishiguchi S."/>
            <person name="Nishikawa S."/>
            <person name="Nori F."/>
            <person name="Ohara O."/>
            <person name="Okazaki Y."/>
            <person name="Orlando V."/>
            <person name="Pang K.C."/>
            <person name="Pavan W.J."/>
            <person name="Pavesi G."/>
            <person name="Pesole G."/>
            <person name="Petrovsky N."/>
            <person name="Piazza S."/>
            <person name="Reed J."/>
            <person name="Reid J.F."/>
            <person name="Ring B.Z."/>
            <person name="Ringwald M."/>
            <person name="Rost B."/>
            <person name="Ruan Y."/>
            <person name="Salzberg S.L."/>
            <person name="Sandelin A."/>
            <person name="Schneider C."/>
            <person name="Schoenbach C."/>
            <person name="Sekiguchi K."/>
            <person name="Semple C.A."/>
            <person name="Seno S."/>
            <person name="Sessa L."/>
            <person name="Sheng Y."/>
            <person name="Shibata Y."/>
            <person name="Shimada H."/>
            <person name="Shimada K."/>
            <person name="Silva D."/>
            <person name="Sinclair B."/>
            <person name="Sperling S."/>
            <person name="Stupka E."/>
            <person name="Sugiura K."/>
            <person name="Sultana R."/>
            <person name="Takenaka Y."/>
            <person name="Taki K."/>
            <person name="Tammoja K."/>
            <person name="Tan S.L."/>
            <person name="Tang S."/>
            <person name="Taylor M.S."/>
            <person name="Tegner J."/>
            <person name="Teichmann S.A."/>
            <person name="Ueda H.R."/>
            <person name="van Nimwegen E."/>
            <person name="Verardo R."/>
            <person name="Wei C.L."/>
            <person name="Yagi K."/>
            <person name="Yamanishi H."/>
            <person name="Zabarovsky E."/>
            <person name="Zhu S."/>
            <person name="Zimmer A."/>
            <person name="Hide W."/>
            <person name="Bult C."/>
            <person name="Grimmond S.M."/>
            <person name="Teasdale R.D."/>
            <person name="Liu E.T."/>
            <person name="Brusic V."/>
            <person name="Quackenbush J."/>
            <person name="Wahlestedt C."/>
            <person name="Mattick J.S."/>
            <person name="Hume D.A."/>
            <person name="Kai C."/>
            <person name="Sasaki D."/>
            <person name="Tomaru Y."/>
            <person name="Fukuda S."/>
            <person name="Kanamori-Katayama M."/>
            <person name="Suzuki M."/>
            <person name="Aoki J."/>
            <person name="Arakawa T."/>
            <person name="Iida J."/>
            <person name="Imamura K."/>
            <person name="Itoh M."/>
            <person name="Kato T."/>
            <person name="Kawaji H."/>
            <person name="Kawagashira N."/>
            <person name="Kawashima T."/>
            <person name="Kojima M."/>
            <person name="Kondo S."/>
            <person name="Konno H."/>
            <person name="Nakano K."/>
            <person name="Ninomiya N."/>
            <person name="Nishio T."/>
            <person name="Okada M."/>
            <person name="Plessy C."/>
            <person name="Shibata K."/>
            <person name="Shiraki T."/>
            <person name="Suzuki S."/>
            <person name="Tagami M."/>
            <person name="Waki K."/>
            <person name="Watahiki A."/>
            <person name="Okamura-Oho Y."/>
            <person name="Suzuki H."/>
            <person name="Kawai J."/>
            <person name="Hayashizaki Y."/>
        </authorList>
    </citation>
    <scope>NUCLEOTIDE SEQUENCE [LARGE SCALE MRNA]</scope>
    <source>
        <strain>C57BL/6J</strain>
        <tissue>Liver</tissue>
    </source>
</reference>
<reference key="2">
    <citation type="journal article" date="2009" name="PLoS Biol.">
        <title>Lineage-specific biology revealed by a finished genome assembly of the mouse.</title>
        <authorList>
            <person name="Church D.M."/>
            <person name="Goodstadt L."/>
            <person name="Hillier L.W."/>
            <person name="Zody M.C."/>
            <person name="Goldstein S."/>
            <person name="She X."/>
            <person name="Bult C.J."/>
            <person name="Agarwala R."/>
            <person name="Cherry J.L."/>
            <person name="DiCuccio M."/>
            <person name="Hlavina W."/>
            <person name="Kapustin Y."/>
            <person name="Meric P."/>
            <person name="Maglott D."/>
            <person name="Birtle Z."/>
            <person name="Marques A.C."/>
            <person name="Graves T."/>
            <person name="Zhou S."/>
            <person name="Teague B."/>
            <person name="Potamousis K."/>
            <person name="Churas C."/>
            <person name="Place M."/>
            <person name="Herschleb J."/>
            <person name="Runnheim R."/>
            <person name="Forrest D."/>
            <person name="Amos-Landgraf J."/>
            <person name="Schwartz D.C."/>
            <person name="Cheng Z."/>
            <person name="Lindblad-Toh K."/>
            <person name="Eichler E.E."/>
            <person name="Ponting C.P."/>
        </authorList>
    </citation>
    <scope>NUCLEOTIDE SEQUENCE [LARGE SCALE GENOMIC DNA]</scope>
    <source>
        <strain>C57BL/6J</strain>
    </source>
</reference>
<reference key="3">
    <citation type="journal article" date="2004" name="Genome Res.">
        <title>The status, quality, and expansion of the NIH full-length cDNA project: the Mammalian Gene Collection (MGC).</title>
        <authorList>
            <consortium name="The MGC Project Team"/>
        </authorList>
    </citation>
    <scope>NUCLEOTIDE SEQUENCE [LARGE SCALE MRNA]</scope>
    <source>
        <strain>FVB/N-3</strain>
        <tissue>Brain</tissue>
        <tissue>Colon</tissue>
        <tissue>Mammary tumor</tissue>
    </source>
</reference>
<reference key="4">
    <citation type="submission" date="1997-06" db="EMBL/GenBank/DDBJ databases">
        <title>Molecular cloning and characterization of mouse doc-1 oral tumor suppressor gene.</title>
        <authorList>
            <person name="Wong D.T.W."/>
            <person name="Tsuji T."/>
            <person name="Todd R."/>
            <person name="McBride J."/>
        </authorList>
    </citation>
    <scope>NUCLEOTIDE SEQUENCE [MRNA] OF 6-114</scope>
    <source>
        <tissue>Fibroblast</tissue>
    </source>
</reference>
<reference key="5">
    <citation type="journal article" date="2000" name="Mol. Cell. Biol.">
        <title>p12(DOC-1) is a novel cyclin-dependent kinase 2-associated protein.</title>
        <authorList>
            <person name="Shintani S."/>
            <person name="Ohyama H."/>
            <person name="Zhang X."/>
            <person name="McBride J."/>
            <person name="Matsuo K."/>
            <person name="Tsuji T."/>
            <person name="Hu M.G."/>
            <person name="Hu G."/>
            <person name="Kohno Y."/>
            <person name="Lerman M."/>
            <person name="Todd R."/>
            <person name="Wong D.T."/>
        </authorList>
    </citation>
    <scope>FUNCTION</scope>
    <scope>INTERACTION WITH CDK2</scope>
</reference>
<reference key="6">
    <citation type="journal article" date="2010" name="Cell">
        <title>A tissue-specific atlas of mouse protein phosphorylation and expression.</title>
        <authorList>
            <person name="Huttlin E.L."/>
            <person name="Jedrychowski M.P."/>
            <person name="Elias J.E."/>
            <person name="Goswami T."/>
            <person name="Rad R."/>
            <person name="Beausoleil S.A."/>
            <person name="Villen J."/>
            <person name="Haas W."/>
            <person name="Sowa M.E."/>
            <person name="Gygi S.P."/>
        </authorList>
    </citation>
    <scope>IDENTIFICATION BY MASS SPECTROMETRY [LARGE SCALE ANALYSIS]</scope>
    <source>
        <tissue>Testis</tissue>
    </source>
</reference>
<feature type="chain" id="PRO_0000089454" description="Cyclin-dependent kinase 2-associated protein 1">
    <location>
        <begin position="1"/>
        <end position="114"/>
    </location>
</feature>
<feature type="region of interest" description="Disordered" evidence="3">
    <location>
        <begin position="18"/>
        <end position="57"/>
    </location>
</feature>
<feature type="region of interest" description="Interaction with CDK2AP2" evidence="1">
    <location>
        <begin position="19"/>
        <end position="24"/>
    </location>
</feature>
<feature type="compositionally biased region" description="Polar residues" evidence="3">
    <location>
        <begin position="20"/>
        <end position="36"/>
    </location>
</feature>
<feature type="compositionally biased region" description="Polar residues" evidence="3">
    <location>
        <begin position="47"/>
        <end position="57"/>
    </location>
</feature>
<feature type="modified residue" description="Phosphoserine; by IKKE" evidence="1">
    <location>
        <position position="45"/>
    </location>
</feature>
<feature type="disulfide bond" description="Interchain" evidence="2">
    <location>
        <position position="104"/>
    </location>
</feature>
<comment type="function">
    <text evidence="1 4">Inhibitor of cyclin-dependent kinase CDK2 (PubMed:10938106). Also acts as a component of the histone deacetylase NuRD complex which participates in the remodeling of chromatin (By similarity).</text>
</comment>
<comment type="subunit">
    <text evidence="1 4">Homodimer (By similarity). Component of the nucleosome remodeling and deacetylase (NuRD) repressor complex, composed of core proteins MTA1, MTA2, MTA3, RBBP4, RBBP7, HDAC1, HDAC2, MBD2, MBD3, and peripherally associated proteins CDK2AP1, CDK2AP2, GATAD2A, GATAD2B, CHD3, CHD4 and CHD5 (By similarity). The exact stoichiometry of the NuRD complex is unknown, and some subunits such as MBD2 and MBD3, GATAD2A and GATAD2B, and CHD3, CHD4 and CHD5 define mutually exclusive NuRD complexes (By similarity). Interacts with monomeric unphosphorylated CDK2 (PubMed:10938106). Interacts with CDK2AP2 (By similarity). Interacts with GATAD2A (By similarity). Interacts with HDAC1 (By similarity). Interacts with HDAC2 (By similarity). Interacts with MBD2 (By similarity). Interacts with MBD3 (By similarity). Interacts with RBBP4 (By similarity). Interacts with RBBP7 (By similarity).</text>
</comment>
<comment type="subcellular location">
    <subcellularLocation>
        <location evidence="1">Nucleus</location>
    </subcellularLocation>
    <subcellularLocation>
        <location evidence="1">Chromosome</location>
    </subcellularLocation>
</comment>
<comment type="PTM">
    <text evidence="1">Phosphorylated in vitro by IKBKE at Ser-45.</text>
</comment>
<comment type="similarity">
    <text evidence="5">Belongs to the CDK2AP family.</text>
</comment>
<dbReference type="EMBL" id="AK004852">
    <property type="protein sequence ID" value="BAB23616.1"/>
    <property type="molecule type" value="mRNA"/>
</dbReference>
<dbReference type="EMBL" id="AL645849">
    <property type="status" value="NOT_ANNOTATED_CDS"/>
    <property type="molecule type" value="Genomic_DNA"/>
</dbReference>
<dbReference type="EMBL" id="BC083075">
    <property type="protein sequence ID" value="AAH83075.1"/>
    <property type="molecule type" value="mRNA"/>
</dbReference>
<dbReference type="EMBL" id="BC103772">
    <property type="protein sequence ID" value="AAI03773.1"/>
    <property type="molecule type" value="mRNA"/>
</dbReference>
<dbReference type="EMBL" id="BC147052">
    <property type="protein sequence ID" value="AAI47053.1"/>
    <property type="molecule type" value="mRNA"/>
</dbReference>
<dbReference type="EMBL" id="BC147053">
    <property type="protein sequence ID" value="AAI47054.1"/>
    <property type="molecule type" value="mRNA"/>
</dbReference>
<dbReference type="EMBL" id="AF011644">
    <property type="protein sequence ID" value="AAB65752.1"/>
    <property type="molecule type" value="mRNA"/>
</dbReference>
<dbReference type="CCDS" id="CCDS39279.1"/>
<dbReference type="RefSeq" id="NP_038840.2">
    <property type="nucleotide sequence ID" value="NM_013812.2"/>
</dbReference>
<dbReference type="SMR" id="O35207"/>
<dbReference type="BioGRID" id="199264">
    <property type="interactions" value="15"/>
</dbReference>
<dbReference type="FunCoup" id="O35207">
    <property type="interactions" value="2102"/>
</dbReference>
<dbReference type="IntAct" id="O35207">
    <property type="interactions" value="13"/>
</dbReference>
<dbReference type="STRING" id="10090.ENSMUSP00000031341"/>
<dbReference type="PhosphoSitePlus" id="O35207"/>
<dbReference type="PaxDb" id="10090-ENSMUSP00000031341"/>
<dbReference type="PeptideAtlas" id="O35207"/>
<dbReference type="ProteomicsDB" id="281441"/>
<dbReference type="Pumba" id="O35207"/>
<dbReference type="DNASU" id="13445"/>
<dbReference type="Ensembl" id="ENSMUST00000031341.11">
    <property type="protein sequence ID" value="ENSMUSP00000031341.5"/>
    <property type="gene ID" value="ENSMUSG00000029394.12"/>
</dbReference>
<dbReference type="Ensembl" id="ENSMUST00000104959.2">
    <property type="protein sequence ID" value="ENSMUSP00000100565.2"/>
    <property type="gene ID" value="ENSMUSG00000078154.4"/>
</dbReference>
<dbReference type="GeneID" id="13445"/>
<dbReference type="KEGG" id="mmu:13445"/>
<dbReference type="UCSC" id="uc008zpo.1">
    <property type="organism name" value="mouse"/>
</dbReference>
<dbReference type="AGR" id="MGI:1202069"/>
<dbReference type="CTD" id="8099"/>
<dbReference type="MGI" id="MGI:1202069">
    <property type="gene designation" value="Cdk2ap1"/>
</dbReference>
<dbReference type="VEuPathDB" id="HostDB:ENSMUSG00000029394"/>
<dbReference type="VEuPathDB" id="HostDB:ENSMUSG00000078154"/>
<dbReference type="eggNOG" id="KOG4713">
    <property type="taxonomic scope" value="Eukaryota"/>
</dbReference>
<dbReference type="GeneTree" id="ENSGT00940000155149"/>
<dbReference type="HOGENOM" id="CLU_130479_1_0_1"/>
<dbReference type="InParanoid" id="O35207"/>
<dbReference type="OMA" id="CGSHRDF"/>
<dbReference type="OrthoDB" id="9628807at2759"/>
<dbReference type="PhylomeDB" id="O35207"/>
<dbReference type="TreeFam" id="TF101037"/>
<dbReference type="BioGRID-ORCS" id="13445">
    <property type="hits" value="6 hits in 77 CRISPR screens"/>
</dbReference>
<dbReference type="ChiTaRS" id="Cdk2ap1">
    <property type="organism name" value="mouse"/>
</dbReference>
<dbReference type="PRO" id="PR:O35207"/>
<dbReference type="Proteomes" id="UP000000589">
    <property type="component" value="Chromosome 11"/>
</dbReference>
<dbReference type="Proteomes" id="UP000000589">
    <property type="component" value="Chromosome 5"/>
</dbReference>
<dbReference type="RNAct" id="O35207">
    <property type="molecule type" value="protein"/>
</dbReference>
<dbReference type="Bgee" id="ENSMUSG00000029394">
    <property type="expression patterns" value="Expressed in undifferentiated genital tubercle and 62 other cell types or tissues"/>
</dbReference>
<dbReference type="ExpressionAtlas" id="O35207">
    <property type="expression patterns" value="baseline and differential"/>
</dbReference>
<dbReference type="GO" id="GO:0005694">
    <property type="term" value="C:chromosome"/>
    <property type="evidence" value="ECO:0007669"/>
    <property type="project" value="UniProtKB-SubCell"/>
</dbReference>
<dbReference type="GO" id="GO:0005634">
    <property type="term" value="C:nucleus"/>
    <property type="evidence" value="ECO:0000250"/>
    <property type="project" value="UniProtKB"/>
</dbReference>
<dbReference type="GO" id="GO:0060325">
    <property type="term" value="P:face morphogenesis"/>
    <property type="evidence" value="ECO:0000315"/>
    <property type="project" value="MGI"/>
</dbReference>
<dbReference type="GO" id="GO:0001701">
    <property type="term" value="P:in utero embryonic development"/>
    <property type="evidence" value="ECO:0000315"/>
    <property type="project" value="MGI"/>
</dbReference>
<dbReference type="Gene3D" id="6.10.140.1300">
    <property type="match status" value="1"/>
</dbReference>
<dbReference type="InterPro" id="IPR017266">
    <property type="entry name" value="DOC_1/2"/>
</dbReference>
<dbReference type="PANTHER" id="PTHR22607:SF2">
    <property type="entry name" value="CYCLIN-DEPENDENT KINASE 2-ASSOCIATED PROTEIN 1"/>
    <property type="match status" value="1"/>
</dbReference>
<dbReference type="PANTHER" id="PTHR22607">
    <property type="entry name" value="DELETED IN ORAL CANCER 1/CDK2-ASSOCIATED PROTEIN 1"/>
    <property type="match status" value="1"/>
</dbReference>
<dbReference type="Pfam" id="PF09806">
    <property type="entry name" value="CDK2AP"/>
    <property type="match status" value="1"/>
</dbReference>
<dbReference type="PIRSF" id="PIRSF037709">
    <property type="entry name" value="CDK2-associated_p2"/>
    <property type="match status" value="1"/>
</dbReference>